<sequence>MSAIDDLPPLREVIRRHDLAARKSLGQNFLLDLNLTARIARAAGPLEGVTVVEIGPGPGGLTRALLATGAKRVIAIERDERALGALEEIAAHYPGRLDIISGDAMEFDPRPLLNGDRARIVANLPYNIATPLLIGWLCAEPWPPWYEMMVLMFQREVAQRIVAHHDDDAYGRLAVLANWRAETQMLFDISPSAFVPPPKVTSSVVRLVPRAQPEPCDRAALEQVAAAAFGQRRKMLRQSLKSLGVDPAQLTAAAGIDPARRAETVPVSGFVAMANELANSRAIRTQA</sequence>
<reference key="1">
    <citation type="journal article" date="2004" name="Nat. Biotechnol.">
        <title>Complete genome sequence of the metabolically versatile photosynthetic bacterium Rhodopseudomonas palustris.</title>
        <authorList>
            <person name="Larimer F.W."/>
            <person name="Chain P."/>
            <person name="Hauser L."/>
            <person name="Lamerdin J.E."/>
            <person name="Malfatti S."/>
            <person name="Do L."/>
            <person name="Land M.L."/>
            <person name="Pelletier D.A."/>
            <person name="Beatty J.T."/>
            <person name="Lang A.S."/>
            <person name="Tabita F.R."/>
            <person name="Gibson J.L."/>
            <person name="Hanson T.E."/>
            <person name="Bobst C."/>
            <person name="Torres y Torres J.L."/>
            <person name="Peres C."/>
            <person name="Harrison F.H."/>
            <person name="Gibson J."/>
            <person name="Harwood C.S."/>
        </authorList>
    </citation>
    <scope>NUCLEOTIDE SEQUENCE [LARGE SCALE GENOMIC DNA]</scope>
    <source>
        <strain>ATCC BAA-98 / CGA009</strain>
    </source>
</reference>
<proteinExistence type="inferred from homology"/>
<evidence type="ECO:0000255" key="1">
    <source>
        <dbReference type="HAMAP-Rule" id="MF_00607"/>
    </source>
</evidence>
<accession>Q6N5B4</accession>
<organism>
    <name type="scientific">Rhodopseudomonas palustris (strain ATCC BAA-98 / CGA009)</name>
    <dbReference type="NCBI Taxonomy" id="258594"/>
    <lineage>
        <taxon>Bacteria</taxon>
        <taxon>Pseudomonadati</taxon>
        <taxon>Pseudomonadota</taxon>
        <taxon>Alphaproteobacteria</taxon>
        <taxon>Hyphomicrobiales</taxon>
        <taxon>Nitrobacteraceae</taxon>
        <taxon>Rhodopseudomonas</taxon>
    </lineage>
</organism>
<protein>
    <recommendedName>
        <fullName evidence="1">Ribosomal RNA small subunit methyltransferase A</fullName>
        <ecNumber evidence="1">2.1.1.182</ecNumber>
    </recommendedName>
    <alternativeName>
        <fullName evidence="1">16S rRNA (adenine(1518)-N(6)/adenine(1519)-N(6))-dimethyltransferase</fullName>
    </alternativeName>
    <alternativeName>
        <fullName evidence="1">16S rRNA dimethyladenosine transferase</fullName>
    </alternativeName>
    <alternativeName>
        <fullName evidence="1">16S rRNA dimethylase</fullName>
    </alternativeName>
    <alternativeName>
        <fullName evidence="1">S-adenosylmethionine-6-N', N'-adenosyl(rRNA) dimethyltransferase</fullName>
    </alternativeName>
</protein>
<dbReference type="EC" id="2.1.1.182" evidence="1"/>
<dbReference type="EMBL" id="BX572602">
    <property type="protein sequence ID" value="CAE28507.1"/>
    <property type="molecule type" value="Genomic_DNA"/>
</dbReference>
<dbReference type="RefSeq" id="WP_011158612.1">
    <property type="nucleotide sequence ID" value="NZ_CP116810.1"/>
</dbReference>
<dbReference type="SMR" id="Q6N5B4"/>
<dbReference type="STRING" id="258594.RPA3066"/>
<dbReference type="GeneID" id="66894148"/>
<dbReference type="eggNOG" id="COG0030">
    <property type="taxonomic scope" value="Bacteria"/>
</dbReference>
<dbReference type="HOGENOM" id="CLU_041220_0_1_5"/>
<dbReference type="PhylomeDB" id="Q6N5B4"/>
<dbReference type="GO" id="GO:0005829">
    <property type="term" value="C:cytosol"/>
    <property type="evidence" value="ECO:0007669"/>
    <property type="project" value="TreeGrafter"/>
</dbReference>
<dbReference type="GO" id="GO:0052908">
    <property type="term" value="F:16S rRNA (adenine(1518)-N(6)/adenine(1519)-N(6))-dimethyltransferase activity"/>
    <property type="evidence" value="ECO:0007669"/>
    <property type="project" value="UniProtKB-EC"/>
</dbReference>
<dbReference type="GO" id="GO:0003723">
    <property type="term" value="F:RNA binding"/>
    <property type="evidence" value="ECO:0007669"/>
    <property type="project" value="UniProtKB-KW"/>
</dbReference>
<dbReference type="CDD" id="cd02440">
    <property type="entry name" value="AdoMet_MTases"/>
    <property type="match status" value="1"/>
</dbReference>
<dbReference type="FunFam" id="1.10.8.100:FF:000001">
    <property type="entry name" value="Ribosomal RNA small subunit methyltransferase A"/>
    <property type="match status" value="1"/>
</dbReference>
<dbReference type="Gene3D" id="1.10.8.100">
    <property type="entry name" value="Ribosomal RNA adenine dimethylase-like, domain 2"/>
    <property type="match status" value="1"/>
</dbReference>
<dbReference type="Gene3D" id="3.40.50.150">
    <property type="entry name" value="Vaccinia Virus protein VP39"/>
    <property type="match status" value="1"/>
</dbReference>
<dbReference type="HAMAP" id="MF_00607">
    <property type="entry name" value="16SrRNA_methyltr_A"/>
    <property type="match status" value="1"/>
</dbReference>
<dbReference type="InterPro" id="IPR001737">
    <property type="entry name" value="KsgA/Erm"/>
</dbReference>
<dbReference type="InterPro" id="IPR023165">
    <property type="entry name" value="rRNA_Ade_diMease-like_C"/>
</dbReference>
<dbReference type="InterPro" id="IPR020596">
    <property type="entry name" value="rRNA_Ade_Mease_Trfase_CS"/>
</dbReference>
<dbReference type="InterPro" id="IPR020598">
    <property type="entry name" value="rRNA_Ade_methylase_Trfase_N"/>
</dbReference>
<dbReference type="InterPro" id="IPR011530">
    <property type="entry name" value="rRNA_adenine_dimethylase"/>
</dbReference>
<dbReference type="InterPro" id="IPR029063">
    <property type="entry name" value="SAM-dependent_MTases_sf"/>
</dbReference>
<dbReference type="NCBIfam" id="TIGR00755">
    <property type="entry name" value="ksgA"/>
    <property type="match status" value="1"/>
</dbReference>
<dbReference type="PANTHER" id="PTHR11727">
    <property type="entry name" value="DIMETHYLADENOSINE TRANSFERASE"/>
    <property type="match status" value="1"/>
</dbReference>
<dbReference type="PANTHER" id="PTHR11727:SF7">
    <property type="entry name" value="DIMETHYLADENOSINE TRANSFERASE-RELATED"/>
    <property type="match status" value="1"/>
</dbReference>
<dbReference type="Pfam" id="PF00398">
    <property type="entry name" value="RrnaAD"/>
    <property type="match status" value="1"/>
</dbReference>
<dbReference type="SMART" id="SM00650">
    <property type="entry name" value="rADc"/>
    <property type="match status" value="1"/>
</dbReference>
<dbReference type="SUPFAM" id="SSF53335">
    <property type="entry name" value="S-adenosyl-L-methionine-dependent methyltransferases"/>
    <property type="match status" value="1"/>
</dbReference>
<dbReference type="PROSITE" id="PS01131">
    <property type="entry name" value="RRNA_A_DIMETH"/>
    <property type="match status" value="1"/>
</dbReference>
<dbReference type="PROSITE" id="PS51689">
    <property type="entry name" value="SAM_RNA_A_N6_MT"/>
    <property type="match status" value="1"/>
</dbReference>
<comment type="function">
    <text evidence="1">Specifically dimethylates two adjacent adenosines (A1518 and A1519) in the loop of a conserved hairpin near the 3'-end of 16S rRNA in the 30S particle. May play a critical role in biogenesis of 30S subunits.</text>
</comment>
<comment type="catalytic activity">
    <reaction evidence="1">
        <text>adenosine(1518)/adenosine(1519) in 16S rRNA + 4 S-adenosyl-L-methionine = N(6)-dimethyladenosine(1518)/N(6)-dimethyladenosine(1519) in 16S rRNA + 4 S-adenosyl-L-homocysteine + 4 H(+)</text>
        <dbReference type="Rhea" id="RHEA:19609"/>
        <dbReference type="Rhea" id="RHEA-COMP:10232"/>
        <dbReference type="Rhea" id="RHEA-COMP:10233"/>
        <dbReference type="ChEBI" id="CHEBI:15378"/>
        <dbReference type="ChEBI" id="CHEBI:57856"/>
        <dbReference type="ChEBI" id="CHEBI:59789"/>
        <dbReference type="ChEBI" id="CHEBI:74411"/>
        <dbReference type="ChEBI" id="CHEBI:74493"/>
        <dbReference type="EC" id="2.1.1.182"/>
    </reaction>
</comment>
<comment type="subcellular location">
    <subcellularLocation>
        <location evidence="1">Cytoplasm</location>
    </subcellularLocation>
</comment>
<comment type="similarity">
    <text evidence="1">Belongs to the class I-like SAM-binding methyltransferase superfamily. rRNA adenine N(6)-methyltransferase family. RsmA subfamily.</text>
</comment>
<name>RSMA_RHOPA</name>
<feature type="chain" id="PRO_0000101593" description="Ribosomal RNA small subunit methyltransferase A">
    <location>
        <begin position="1"/>
        <end position="287"/>
    </location>
</feature>
<feature type="binding site" evidence="1">
    <location>
        <position position="28"/>
    </location>
    <ligand>
        <name>S-adenosyl-L-methionine</name>
        <dbReference type="ChEBI" id="CHEBI:59789"/>
    </ligand>
</feature>
<feature type="binding site" evidence="1">
    <location>
        <position position="30"/>
    </location>
    <ligand>
        <name>S-adenosyl-L-methionine</name>
        <dbReference type="ChEBI" id="CHEBI:59789"/>
    </ligand>
</feature>
<feature type="binding site" evidence="1">
    <location>
        <position position="55"/>
    </location>
    <ligand>
        <name>S-adenosyl-L-methionine</name>
        <dbReference type="ChEBI" id="CHEBI:59789"/>
    </ligand>
</feature>
<feature type="binding site" evidence="1">
    <location>
        <position position="77"/>
    </location>
    <ligand>
        <name>S-adenosyl-L-methionine</name>
        <dbReference type="ChEBI" id="CHEBI:59789"/>
    </ligand>
</feature>
<feature type="binding site" evidence="1">
    <location>
        <position position="103"/>
    </location>
    <ligand>
        <name>S-adenosyl-L-methionine</name>
        <dbReference type="ChEBI" id="CHEBI:59789"/>
    </ligand>
</feature>
<feature type="binding site" evidence="1">
    <location>
        <position position="123"/>
    </location>
    <ligand>
        <name>S-adenosyl-L-methionine</name>
        <dbReference type="ChEBI" id="CHEBI:59789"/>
    </ligand>
</feature>
<gene>
    <name evidence="1" type="primary">rsmA</name>
    <name evidence="1" type="synonym">ksgA</name>
    <name type="ordered locus">RPA3066</name>
</gene>
<keyword id="KW-0963">Cytoplasm</keyword>
<keyword id="KW-0489">Methyltransferase</keyword>
<keyword id="KW-0694">RNA-binding</keyword>
<keyword id="KW-0698">rRNA processing</keyword>
<keyword id="KW-0949">S-adenosyl-L-methionine</keyword>
<keyword id="KW-0808">Transferase</keyword>